<evidence type="ECO:0000255" key="1">
    <source>
        <dbReference type="HAMAP-Rule" id="MF_00813"/>
    </source>
</evidence>
<name>ALLC_RHIME</name>
<comment type="catalytic activity">
    <reaction evidence="1">
        <text>allantoate + H2O = (S)-ureidoglycolate + urea</text>
        <dbReference type="Rhea" id="RHEA:11016"/>
        <dbReference type="ChEBI" id="CHEBI:15377"/>
        <dbReference type="ChEBI" id="CHEBI:16199"/>
        <dbReference type="ChEBI" id="CHEBI:17536"/>
        <dbReference type="ChEBI" id="CHEBI:57296"/>
        <dbReference type="EC" id="3.5.3.4"/>
    </reaction>
</comment>
<comment type="pathway">
    <text evidence="1">Nitrogen metabolism; (S)-allantoin degradation; (S)-ureidoglycolate from allantoate (aminidohydrolase route): step 1/1.</text>
</comment>
<comment type="similarity">
    <text evidence="1">Belongs to the allantoicase family.</text>
</comment>
<geneLocation type="plasmid">
    <name>pSymB</name>
    <name>megaplasmid 2</name>
</geneLocation>
<proteinExistence type="inferred from homology"/>
<dbReference type="EC" id="3.5.3.4" evidence="1"/>
<dbReference type="EMBL" id="AL591985">
    <property type="protein sequence ID" value="CAC49187.1"/>
    <property type="molecule type" value="Genomic_DNA"/>
</dbReference>
<dbReference type="PIR" id="C95940">
    <property type="entry name" value="C95940"/>
</dbReference>
<dbReference type="RefSeq" id="NP_437327.1">
    <property type="nucleotide sequence ID" value="NC_003078.1"/>
</dbReference>
<dbReference type="RefSeq" id="WP_010975643.1">
    <property type="nucleotide sequence ID" value="NC_003078.1"/>
</dbReference>
<dbReference type="SMR" id="Q92VC1"/>
<dbReference type="EnsemblBacteria" id="CAC49187">
    <property type="protein sequence ID" value="CAC49187"/>
    <property type="gene ID" value="SM_b21283"/>
</dbReference>
<dbReference type="KEGG" id="sme:SM_b21283"/>
<dbReference type="PATRIC" id="fig|266834.11.peg.5717"/>
<dbReference type="eggNOG" id="COG4266">
    <property type="taxonomic scope" value="Bacteria"/>
</dbReference>
<dbReference type="HOGENOM" id="CLU_038797_1_2_5"/>
<dbReference type="OrthoDB" id="2078334at2"/>
<dbReference type="UniPathway" id="UPA00395">
    <property type="reaction ID" value="UER00654"/>
</dbReference>
<dbReference type="PRO" id="PR:Q92VC1"/>
<dbReference type="Proteomes" id="UP000001976">
    <property type="component" value="Plasmid pSymB"/>
</dbReference>
<dbReference type="GO" id="GO:0004037">
    <property type="term" value="F:allantoicase activity"/>
    <property type="evidence" value="ECO:0007669"/>
    <property type="project" value="UniProtKB-UniRule"/>
</dbReference>
<dbReference type="GO" id="GO:0000256">
    <property type="term" value="P:allantoin catabolic process"/>
    <property type="evidence" value="ECO:0007669"/>
    <property type="project" value="UniProtKB-UniRule"/>
</dbReference>
<dbReference type="GO" id="GO:0006144">
    <property type="term" value="P:purine nucleobase metabolic process"/>
    <property type="evidence" value="ECO:0007669"/>
    <property type="project" value="UniProtKB-KW"/>
</dbReference>
<dbReference type="Gene3D" id="2.60.120.260">
    <property type="entry name" value="Galactose-binding domain-like"/>
    <property type="match status" value="2"/>
</dbReference>
<dbReference type="HAMAP" id="MF_00813">
    <property type="entry name" value="Allantoicase"/>
    <property type="match status" value="1"/>
</dbReference>
<dbReference type="InterPro" id="IPR005164">
    <property type="entry name" value="Allantoicase"/>
</dbReference>
<dbReference type="InterPro" id="IPR015908">
    <property type="entry name" value="Allantoicase_dom"/>
</dbReference>
<dbReference type="InterPro" id="IPR008979">
    <property type="entry name" value="Galactose-bd-like_sf"/>
</dbReference>
<dbReference type="NCBIfam" id="TIGR02961">
    <property type="entry name" value="allantoicase"/>
    <property type="match status" value="1"/>
</dbReference>
<dbReference type="PANTHER" id="PTHR12045">
    <property type="entry name" value="ALLANTOICASE"/>
    <property type="match status" value="1"/>
</dbReference>
<dbReference type="PANTHER" id="PTHR12045:SF3">
    <property type="entry name" value="INACTIVE ALLANTOICASE-RELATED"/>
    <property type="match status" value="1"/>
</dbReference>
<dbReference type="Pfam" id="PF03561">
    <property type="entry name" value="Allantoicase"/>
    <property type="match status" value="2"/>
</dbReference>
<dbReference type="PIRSF" id="PIRSF016516">
    <property type="entry name" value="Allantoicase"/>
    <property type="match status" value="1"/>
</dbReference>
<dbReference type="SUPFAM" id="SSF49785">
    <property type="entry name" value="Galactose-binding domain-like"/>
    <property type="match status" value="2"/>
</dbReference>
<sequence>MTRAGEVLPGFAGGTINLASAGLGARALFATDEFFGPLERMLKDEPAAFHPGLYDDHGKWMDGWETRRRRGAGHDYAVIALAAKGRIAGFDVDTSHFTGNYPSACSIEACHSAEDPDEATEWVQLLPVTGLGPNAHHFFAAHSDAVYSHIRLRIHPDGGIARLRVYGTPALDLKAMANETIDLASCLLGGRIVAFSNGHYGHERLIAPGRGANMGDGWETRRRREPGYDWIIVKLAARGHVERILVDTAHFKGNYPDACSLQAADLGGMTAECDMLVASSAMFWNELLPHRKLSADSVHEYGSDMLRHADPVTHVRLNIYPDGGVSRLRIYGRVADPRSR</sequence>
<accession>Q92VC1</accession>
<keyword id="KW-0378">Hydrolase</keyword>
<keyword id="KW-0614">Plasmid</keyword>
<keyword id="KW-0659">Purine metabolism</keyword>
<keyword id="KW-1185">Reference proteome</keyword>
<reference key="1">
    <citation type="journal article" date="2001" name="Proc. Natl. Acad. Sci. U.S.A.">
        <title>The complete sequence of the 1,683-kb pSymB megaplasmid from the N2-fixing endosymbiont Sinorhizobium meliloti.</title>
        <authorList>
            <person name="Finan T.M."/>
            <person name="Weidner S."/>
            <person name="Wong K."/>
            <person name="Buhrmester J."/>
            <person name="Chain P."/>
            <person name="Vorhoelter F.J."/>
            <person name="Hernandez-Lucas I."/>
            <person name="Becker A."/>
            <person name="Cowie A."/>
            <person name="Gouzy J."/>
            <person name="Golding B."/>
            <person name="Puehler A."/>
        </authorList>
    </citation>
    <scope>NUCLEOTIDE SEQUENCE [LARGE SCALE GENOMIC DNA]</scope>
    <source>
        <strain>1021</strain>
    </source>
</reference>
<reference key="2">
    <citation type="journal article" date="2001" name="Science">
        <title>The composite genome of the legume symbiont Sinorhizobium meliloti.</title>
        <authorList>
            <person name="Galibert F."/>
            <person name="Finan T.M."/>
            <person name="Long S.R."/>
            <person name="Puehler A."/>
            <person name="Abola P."/>
            <person name="Ampe F."/>
            <person name="Barloy-Hubler F."/>
            <person name="Barnett M.J."/>
            <person name="Becker A."/>
            <person name="Boistard P."/>
            <person name="Bothe G."/>
            <person name="Boutry M."/>
            <person name="Bowser L."/>
            <person name="Buhrmester J."/>
            <person name="Cadieu E."/>
            <person name="Capela D."/>
            <person name="Chain P."/>
            <person name="Cowie A."/>
            <person name="Davis R.W."/>
            <person name="Dreano S."/>
            <person name="Federspiel N.A."/>
            <person name="Fisher R.F."/>
            <person name="Gloux S."/>
            <person name="Godrie T."/>
            <person name="Goffeau A."/>
            <person name="Golding B."/>
            <person name="Gouzy J."/>
            <person name="Gurjal M."/>
            <person name="Hernandez-Lucas I."/>
            <person name="Hong A."/>
            <person name="Huizar L."/>
            <person name="Hyman R.W."/>
            <person name="Jones T."/>
            <person name="Kahn D."/>
            <person name="Kahn M.L."/>
            <person name="Kalman S."/>
            <person name="Keating D.H."/>
            <person name="Kiss E."/>
            <person name="Komp C."/>
            <person name="Lelaure V."/>
            <person name="Masuy D."/>
            <person name="Palm C."/>
            <person name="Peck M.C."/>
            <person name="Pohl T.M."/>
            <person name="Portetelle D."/>
            <person name="Purnelle B."/>
            <person name="Ramsperger U."/>
            <person name="Surzycki R."/>
            <person name="Thebault P."/>
            <person name="Vandenbol M."/>
            <person name="Vorhoelter F.J."/>
            <person name="Weidner S."/>
            <person name="Wells D.H."/>
            <person name="Wong K."/>
            <person name="Yeh K.-C."/>
            <person name="Batut J."/>
        </authorList>
    </citation>
    <scope>NUCLEOTIDE SEQUENCE [LARGE SCALE GENOMIC DNA]</scope>
    <source>
        <strain>1021</strain>
    </source>
</reference>
<organism>
    <name type="scientific">Rhizobium meliloti (strain 1021)</name>
    <name type="common">Ensifer meliloti</name>
    <name type="synonym">Sinorhizobium meliloti</name>
    <dbReference type="NCBI Taxonomy" id="266834"/>
    <lineage>
        <taxon>Bacteria</taxon>
        <taxon>Pseudomonadati</taxon>
        <taxon>Pseudomonadota</taxon>
        <taxon>Alphaproteobacteria</taxon>
        <taxon>Hyphomicrobiales</taxon>
        <taxon>Rhizobiaceae</taxon>
        <taxon>Sinorhizobium/Ensifer group</taxon>
        <taxon>Sinorhizobium</taxon>
    </lineage>
</organism>
<protein>
    <recommendedName>
        <fullName evidence="1">Probable allantoicase</fullName>
        <ecNumber evidence="1">3.5.3.4</ecNumber>
    </recommendedName>
    <alternativeName>
        <fullName evidence="1">Allantoate amidinohydrolase</fullName>
    </alternativeName>
</protein>
<gene>
    <name evidence="1" type="primary">alc</name>
    <name type="ordered locus">RB0787</name>
    <name type="ORF">SMb21283</name>
</gene>
<feature type="chain" id="PRO_0000205927" description="Probable allantoicase">
    <location>
        <begin position="1"/>
        <end position="340"/>
    </location>
</feature>